<comment type="function">
    <text evidence="2">The monopolin-like pcs1/mde4 complex is essential for accurate chromosome segregation during mitosis and meiosis II. May clamp together microtubule binding sites on the same kinetochore, preventing merotelic attachment of microtubules.</text>
</comment>
<comment type="subunit">
    <text>Component of a monopolin-like complex composed of pcs1 and mde4. The complex associates with the kinetochore.</text>
</comment>
<comment type="interaction">
    <interactant intactId="EBI-2211118">
        <id>O43068</id>
    </interactant>
    <interactant intactId="EBI-2211100">
        <id>O13684</id>
        <label>pcs1</label>
    </interactant>
    <organismsDiffer>false</organismsDiffer>
    <experiments>3</experiments>
</comment>
<comment type="subcellular location">
    <subcellularLocation>
        <location evidence="2">Nucleus</location>
    </subcellularLocation>
    <subcellularLocation>
        <location evidence="2">Chromosome</location>
        <location evidence="2">Centromere</location>
    </subcellularLocation>
    <text>Localizes to the central core of the centromere.</text>
</comment>
<comment type="miscellaneous">
    <text>Transcription is induced by mei4 transcription factor.</text>
</comment>
<proteinExistence type="evidence at protein level"/>
<dbReference type="EMBL" id="CU329671">
    <property type="protein sequence ID" value="CAA17047.1"/>
    <property type="molecule type" value="Genomic_DNA"/>
</dbReference>
<dbReference type="PIR" id="T40645">
    <property type="entry name" value="T40645"/>
</dbReference>
<dbReference type="RefSeq" id="NP_596083.1">
    <property type="nucleotide sequence ID" value="NM_001021997.2"/>
</dbReference>
<dbReference type="SMR" id="O43068"/>
<dbReference type="BioGRID" id="277670">
    <property type="interactions" value="18"/>
</dbReference>
<dbReference type="DIP" id="DIP-47342N"/>
<dbReference type="FunCoup" id="O43068">
    <property type="interactions" value="3"/>
</dbReference>
<dbReference type="IntAct" id="O43068">
    <property type="interactions" value="3"/>
</dbReference>
<dbReference type="STRING" id="284812.O43068"/>
<dbReference type="iPTMnet" id="O43068"/>
<dbReference type="PaxDb" id="4896-SPBC6B1.04.1"/>
<dbReference type="EnsemblFungi" id="SPBC6B1.04.1">
    <property type="protein sequence ID" value="SPBC6B1.04.1:pep"/>
    <property type="gene ID" value="SPBC6B1.04"/>
</dbReference>
<dbReference type="GeneID" id="2541155"/>
<dbReference type="KEGG" id="spo:2541155"/>
<dbReference type="PomBase" id="SPBC6B1.04">
    <property type="gene designation" value="mde4"/>
</dbReference>
<dbReference type="VEuPathDB" id="FungiDB:SPBC6B1.04"/>
<dbReference type="HOGENOM" id="CLU_669318_0_0_1"/>
<dbReference type="InParanoid" id="O43068"/>
<dbReference type="OMA" id="ETEESNW"/>
<dbReference type="PRO" id="PR:O43068"/>
<dbReference type="Proteomes" id="UP000002485">
    <property type="component" value="Chromosome II"/>
</dbReference>
<dbReference type="GO" id="GO:0034506">
    <property type="term" value="C:chromosome, centromeric core domain"/>
    <property type="evidence" value="ECO:0000314"/>
    <property type="project" value="PomBase"/>
</dbReference>
<dbReference type="GO" id="GO:0072686">
    <property type="term" value="C:mitotic spindle"/>
    <property type="evidence" value="ECO:0007005"/>
    <property type="project" value="PomBase"/>
</dbReference>
<dbReference type="GO" id="GO:0044732">
    <property type="term" value="C:mitotic spindle pole body"/>
    <property type="evidence" value="ECO:0007005"/>
    <property type="project" value="PomBase"/>
</dbReference>
<dbReference type="GO" id="GO:0033551">
    <property type="term" value="C:monopolin complex"/>
    <property type="evidence" value="ECO:0000314"/>
    <property type="project" value="PomBase"/>
</dbReference>
<dbReference type="GO" id="GO:0005730">
    <property type="term" value="C:nucleolus"/>
    <property type="evidence" value="ECO:0000314"/>
    <property type="project" value="PomBase"/>
</dbReference>
<dbReference type="GO" id="GO:0005634">
    <property type="term" value="C:nucleus"/>
    <property type="evidence" value="ECO:0000314"/>
    <property type="project" value="PomBase"/>
</dbReference>
<dbReference type="GO" id="GO:0051315">
    <property type="term" value="P:attachment of mitotic spindle microtubules to kinetochore"/>
    <property type="evidence" value="ECO:0000315"/>
    <property type="project" value="PomBase"/>
</dbReference>
<dbReference type="GO" id="GO:0051301">
    <property type="term" value="P:cell division"/>
    <property type="evidence" value="ECO:0007669"/>
    <property type="project" value="UniProtKB-KW"/>
</dbReference>
<dbReference type="GO" id="GO:0045144">
    <property type="term" value="P:meiotic sister chromatid segregation"/>
    <property type="evidence" value="ECO:0000315"/>
    <property type="project" value="PomBase"/>
</dbReference>
<dbReference type="GO" id="GO:1990893">
    <property type="term" value="P:mitotic chromosome centromere condensation"/>
    <property type="evidence" value="ECO:0000315"/>
    <property type="project" value="PomBase"/>
</dbReference>
<dbReference type="InterPro" id="IPR018479">
    <property type="entry name" value="Lrs4/Mde4"/>
</dbReference>
<dbReference type="Pfam" id="PF10422">
    <property type="entry name" value="LRS4"/>
    <property type="match status" value="1"/>
</dbReference>
<gene>
    <name type="primary">mde4</name>
    <name type="ORF">SPBC6B1.04</name>
</gene>
<organism>
    <name type="scientific">Schizosaccharomyces pombe (strain 972 / ATCC 24843)</name>
    <name type="common">Fission yeast</name>
    <dbReference type="NCBI Taxonomy" id="284812"/>
    <lineage>
        <taxon>Eukaryota</taxon>
        <taxon>Fungi</taxon>
        <taxon>Dikarya</taxon>
        <taxon>Ascomycota</taxon>
        <taxon>Taphrinomycotina</taxon>
        <taxon>Schizosaccharomycetes</taxon>
        <taxon>Schizosaccharomycetales</taxon>
        <taxon>Schizosaccharomycetaceae</taxon>
        <taxon>Schizosaccharomyces</taxon>
    </lineage>
</organism>
<evidence type="ECO:0000256" key="1">
    <source>
        <dbReference type="SAM" id="MobiDB-lite"/>
    </source>
</evidence>
<evidence type="ECO:0000269" key="2">
    <source>
    </source>
</evidence>
<reference key="1">
    <citation type="journal article" date="2002" name="Nature">
        <title>The genome sequence of Schizosaccharomyces pombe.</title>
        <authorList>
            <person name="Wood V."/>
            <person name="Gwilliam R."/>
            <person name="Rajandream M.A."/>
            <person name="Lyne M.H."/>
            <person name="Lyne R."/>
            <person name="Stewart A."/>
            <person name="Sgouros J.G."/>
            <person name="Peat N."/>
            <person name="Hayles J."/>
            <person name="Baker S.G."/>
            <person name="Basham D."/>
            <person name="Bowman S."/>
            <person name="Brooks K."/>
            <person name="Brown D."/>
            <person name="Brown S."/>
            <person name="Chillingworth T."/>
            <person name="Churcher C.M."/>
            <person name="Collins M."/>
            <person name="Connor R."/>
            <person name="Cronin A."/>
            <person name="Davis P."/>
            <person name="Feltwell T."/>
            <person name="Fraser A."/>
            <person name="Gentles S."/>
            <person name="Goble A."/>
            <person name="Hamlin N."/>
            <person name="Harris D.E."/>
            <person name="Hidalgo J."/>
            <person name="Hodgson G."/>
            <person name="Holroyd S."/>
            <person name="Hornsby T."/>
            <person name="Howarth S."/>
            <person name="Huckle E.J."/>
            <person name="Hunt S."/>
            <person name="Jagels K."/>
            <person name="James K.D."/>
            <person name="Jones L."/>
            <person name="Jones M."/>
            <person name="Leather S."/>
            <person name="McDonald S."/>
            <person name="McLean J."/>
            <person name="Mooney P."/>
            <person name="Moule S."/>
            <person name="Mungall K.L."/>
            <person name="Murphy L.D."/>
            <person name="Niblett D."/>
            <person name="Odell C."/>
            <person name="Oliver K."/>
            <person name="O'Neil S."/>
            <person name="Pearson D."/>
            <person name="Quail M.A."/>
            <person name="Rabbinowitsch E."/>
            <person name="Rutherford K.M."/>
            <person name="Rutter S."/>
            <person name="Saunders D."/>
            <person name="Seeger K."/>
            <person name="Sharp S."/>
            <person name="Skelton J."/>
            <person name="Simmonds M.N."/>
            <person name="Squares R."/>
            <person name="Squares S."/>
            <person name="Stevens K."/>
            <person name="Taylor K."/>
            <person name="Taylor R.G."/>
            <person name="Tivey A."/>
            <person name="Walsh S.V."/>
            <person name="Warren T."/>
            <person name="Whitehead S."/>
            <person name="Woodward J.R."/>
            <person name="Volckaert G."/>
            <person name="Aert R."/>
            <person name="Robben J."/>
            <person name="Grymonprez B."/>
            <person name="Weltjens I."/>
            <person name="Vanstreels E."/>
            <person name="Rieger M."/>
            <person name="Schaefer M."/>
            <person name="Mueller-Auer S."/>
            <person name="Gabel C."/>
            <person name="Fuchs M."/>
            <person name="Duesterhoeft A."/>
            <person name="Fritzc C."/>
            <person name="Holzer E."/>
            <person name="Moestl D."/>
            <person name="Hilbert H."/>
            <person name="Borzym K."/>
            <person name="Langer I."/>
            <person name="Beck A."/>
            <person name="Lehrach H."/>
            <person name="Reinhardt R."/>
            <person name="Pohl T.M."/>
            <person name="Eger P."/>
            <person name="Zimmermann W."/>
            <person name="Wedler H."/>
            <person name="Wambutt R."/>
            <person name="Purnelle B."/>
            <person name="Goffeau A."/>
            <person name="Cadieu E."/>
            <person name="Dreano S."/>
            <person name="Gloux S."/>
            <person name="Lelaure V."/>
            <person name="Mottier S."/>
            <person name="Galibert F."/>
            <person name="Aves S.J."/>
            <person name="Xiang Z."/>
            <person name="Hunt C."/>
            <person name="Moore K."/>
            <person name="Hurst S.M."/>
            <person name="Lucas M."/>
            <person name="Rochet M."/>
            <person name="Gaillardin C."/>
            <person name="Tallada V.A."/>
            <person name="Garzon A."/>
            <person name="Thode G."/>
            <person name="Daga R.R."/>
            <person name="Cruzado L."/>
            <person name="Jimenez J."/>
            <person name="Sanchez M."/>
            <person name="del Rey F."/>
            <person name="Benito J."/>
            <person name="Dominguez A."/>
            <person name="Revuelta J.L."/>
            <person name="Moreno S."/>
            <person name="Armstrong J."/>
            <person name="Forsburg S.L."/>
            <person name="Cerutti L."/>
            <person name="Lowe T."/>
            <person name="McCombie W.R."/>
            <person name="Paulsen I."/>
            <person name="Potashkin J."/>
            <person name="Shpakovski G.V."/>
            <person name="Ussery D."/>
            <person name="Barrell B.G."/>
            <person name="Nurse P."/>
        </authorList>
    </citation>
    <scope>NUCLEOTIDE SEQUENCE [LARGE SCALE GENOMIC DNA]</scope>
    <source>
        <strain>972 / ATCC 24843</strain>
    </source>
</reference>
<reference key="2">
    <citation type="journal article" date="2007" name="Curr. Biol.">
        <title>The kinetochore proteins Pcs1 and Mde4 and heterochromatin are required to prevent merotelic orientation.</title>
        <authorList>
            <person name="Gregan J."/>
            <person name="Riedel C.G."/>
            <person name="Pidoux A.L."/>
            <person name="Katou Y."/>
            <person name="Rumpf C."/>
            <person name="Schleiffer A."/>
            <person name="Kearsey S.E."/>
            <person name="Shirahige K."/>
            <person name="Allshire R.C."/>
            <person name="Nasmyth K."/>
        </authorList>
    </citation>
    <scope>FUNCTION</scope>
    <scope>INTERACTION WITH PCS1</scope>
    <scope>SUBCELLULAR LOCATION</scope>
</reference>
<keyword id="KW-0131">Cell cycle</keyword>
<keyword id="KW-0132">Cell division</keyword>
<keyword id="KW-0137">Centromere</keyword>
<keyword id="KW-0158">Chromosome</keyword>
<keyword id="KW-0469">Meiosis</keyword>
<keyword id="KW-0498">Mitosis</keyword>
<keyword id="KW-0539">Nucleus</keyword>
<keyword id="KW-1185">Reference proteome</keyword>
<feature type="chain" id="PRO_0000096323" description="Monopolin complex subunit mde4">
    <location>
        <begin position="1"/>
        <end position="421"/>
    </location>
</feature>
<feature type="region of interest" description="Disordered" evidence="1">
    <location>
        <begin position="122"/>
        <end position="158"/>
    </location>
</feature>
<feature type="region of interest" description="Disordered" evidence="1">
    <location>
        <begin position="224"/>
        <end position="316"/>
    </location>
</feature>
<feature type="compositionally biased region" description="Polar residues" evidence="1">
    <location>
        <begin position="133"/>
        <end position="149"/>
    </location>
</feature>
<feature type="compositionally biased region" description="Basic and acidic residues" evidence="1">
    <location>
        <begin position="224"/>
        <end position="238"/>
    </location>
</feature>
<feature type="compositionally biased region" description="Polar residues" evidence="1">
    <location>
        <begin position="262"/>
        <end position="287"/>
    </location>
</feature>
<feature type="compositionally biased region" description="Low complexity" evidence="1">
    <location>
        <begin position="288"/>
        <end position="304"/>
    </location>
</feature>
<sequence>MSTISTSTDSKLDNLGLSVTSRRNQILFYLSKALNLAHLLRSDSLQKSFLDALKQSATDSELLHKNLDEIKFLQNEKLNNEKLLEQEQNEANDYRLKVERLEHKISDYVQEINSLNSQLQIQKSNPEKHEDAVSQNRLRGSLDTVSSPSKTHKANKDEKATRLHLIIANLKKALKEKDAEVLNLQSHVSSKESELDRFKIKLETEESNWKVRLQVLESKLATQDRKLRMQKKSTERKSLLVSPRVSSPKLFSPSKQAIMGTRQPNATSGSPLSVTPFLQKTSTSIGLSSSPPQSSPSAQSSQPFSRDKYPHSMTVSPSNARYLKKHLDDTIPSNVSDINHNDHLKIPQSPSSLSPSKIPIRKKRKLKDTVSNCEFTEEDSESSFLLETIQPTKSTLRRSISPLKKRNDEINELKKGFTMKK</sequence>
<accession>O43068</accession>
<protein>
    <recommendedName>
        <fullName>Monopolin complex subunit mde4</fullName>
    </recommendedName>
    <alternativeName>
        <fullName>Mei4-dependent protein 4</fullName>
    </alternativeName>
</protein>
<name>MDE4_SCHPO</name>